<gene>
    <name type="primary">Tmem150c</name>
</gene>
<organism>
    <name type="scientific">Rattus norvegicus</name>
    <name type="common">Rat</name>
    <dbReference type="NCBI Taxonomy" id="10116"/>
    <lineage>
        <taxon>Eukaryota</taxon>
        <taxon>Metazoa</taxon>
        <taxon>Chordata</taxon>
        <taxon>Craniata</taxon>
        <taxon>Vertebrata</taxon>
        <taxon>Euteleostomi</taxon>
        <taxon>Mammalia</taxon>
        <taxon>Eutheria</taxon>
        <taxon>Euarchontoglires</taxon>
        <taxon>Glires</taxon>
        <taxon>Rodentia</taxon>
        <taxon>Myomorpha</taxon>
        <taxon>Muroidea</taxon>
        <taxon>Muridae</taxon>
        <taxon>Murinae</taxon>
        <taxon>Rattus</taxon>
    </lineage>
</organism>
<name>T150C_RAT</name>
<feature type="chain" id="PRO_0000395034" description="Transmembrane protein 150C">
    <location>
        <begin position="1"/>
        <end position="249"/>
    </location>
</feature>
<feature type="topological domain" description="Cytoplasmic" evidence="5">
    <location>
        <begin position="1"/>
        <end position="9"/>
    </location>
</feature>
<feature type="transmembrane region" description="Helical" evidence="4">
    <location>
        <begin position="10"/>
        <end position="30"/>
    </location>
</feature>
<feature type="topological domain" description="Extracellular" evidence="5">
    <location>
        <begin position="31"/>
        <end position="64"/>
    </location>
</feature>
<feature type="transmembrane region" description="Helical" evidence="4">
    <location>
        <begin position="65"/>
        <end position="85"/>
    </location>
</feature>
<feature type="topological domain" description="Cytoplasmic" evidence="5">
    <location>
        <begin position="86"/>
        <end position="97"/>
    </location>
</feature>
<feature type="transmembrane region" description="Helical" evidence="4">
    <location>
        <begin position="98"/>
        <end position="118"/>
    </location>
</feature>
<feature type="topological domain" description="Extracellular" evidence="5">
    <location>
        <begin position="119"/>
        <end position="130"/>
    </location>
</feature>
<feature type="transmembrane region" description="Helical" evidence="4">
    <location>
        <begin position="131"/>
        <end position="151"/>
    </location>
</feature>
<feature type="topological domain" description="Cytoplasmic" evidence="5">
    <location>
        <begin position="152"/>
        <end position="168"/>
    </location>
</feature>
<feature type="transmembrane region" description="Helical" evidence="4">
    <location>
        <begin position="169"/>
        <end position="189"/>
    </location>
</feature>
<feature type="topological domain" description="Extracellular" evidence="5">
    <location>
        <begin position="190"/>
        <end position="192"/>
    </location>
</feature>
<feature type="transmembrane region" description="Helical" evidence="4">
    <location>
        <begin position="193"/>
        <end position="213"/>
    </location>
</feature>
<feature type="topological domain" description="Cytoplasmic" evidence="2">
    <location>
        <begin position="214"/>
        <end position="249"/>
    </location>
</feature>
<dbReference type="EMBL" id="CH474022">
    <property type="protein sequence ID" value="EDL99579.1"/>
    <property type="molecule type" value="Genomic_DNA"/>
</dbReference>
<dbReference type="EMBL" id="CH474022">
    <property type="protein sequence ID" value="EDL99581.1"/>
    <property type="molecule type" value="Genomic_DNA"/>
</dbReference>
<dbReference type="EMBL" id="BC169066">
    <property type="protein sequence ID" value="AAI69066.1"/>
    <property type="molecule type" value="mRNA"/>
</dbReference>
<dbReference type="RefSeq" id="NP_001101824.1">
    <property type="nucleotide sequence ID" value="NM_001108354.3"/>
</dbReference>
<dbReference type="RefSeq" id="XP_006250732.1">
    <property type="nucleotide sequence ID" value="XM_006250670.5"/>
</dbReference>
<dbReference type="RefSeq" id="XP_017454771.1">
    <property type="nucleotide sequence ID" value="XM_017599282.1"/>
</dbReference>
<dbReference type="RefSeq" id="XP_063129401.1">
    <property type="nucleotide sequence ID" value="XM_063273331.1"/>
</dbReference>
<dbReference type="FunCoup" id="B5DFH9">
    <property type="interactions" value="609"/>
</dbReference>
<dbReference type="STRING" id="10116.ENSRNOP00000003076"/>
<dbReference type="PhosphoSitePlus" id="B5DFH9"/>
<dbReference type="PaxDb" id="10116-ENSRNOP00000003076"/>
<dbReference type="Ensembl" id="ENSRNOT00000003076.8">
    <property type="protein sequence ID" value="ENSRNOP00000003076.5"/>
    <property type="gene ID" value="ENSRNOG00000002258.8"/>
</dbReference>
<dbReference type="GeneID" id="360916"/>
<dbReference type="KEGG" id="rno:360916"/>
<dbReference type="UCSC" id="RGD:1306105">
    <property type="organism name" value="rat"/>
</dbReference>
<dbReference type="AGR" id="RGD:1306105"/>
<dbReference type="CTD" id="441027"/>
<dbReference type="RGD" id="1306105">
    <property type="gene designation" value="Tmem150c"/>
</dbReference>
<dbReference type="eggNOG" id="KOG4320">
    <property type="taxonomic scope" value="Eukaryota"/>
</dbReference>
<dbReference type="GeneTree" id="ENSGT01030000234578"/>
<dbReference type="HOGENOM" id="CLU_059992_0_1_1"/>
<dbReference type="InParanoid" id="B5DFH9"/>
<dbReference type="OMA" id="VYFIAVY"/>
<dbReference type="OrthoDB" id="9865811at2759"/>
<dbReference type="PhylomeDB" id="B5DFH9"/>
<dbReference type="TreeFam" id="TF314508"/>
<dbReference type="PRO" id="PR:B5DFH9"/>
<dbReference type="Proteomes" id="UP000002494">
    <property type="component" value="Chromosome 14"/>
</dbReference>
<dbReference type="Proteomes" id="UP000234681">
    <property type="component" value="Chromosome 14"/>
</dbReference>
<dbReference type="Bgee" id="ENSRNOG00000002258">
    <property type="expression patterns" value="Expressed in Ammon's horn and 20 other cell types or tissues"/>
</dbReference>
<dbReference type="GO" id="GO:0005765">
    <property type="term" value="C:lysosomal membrane"/>
    <property type="evidence" value="ECO:0007669"/>
    <property type="project" value="UniProtKB-SubCell"/>
</dbReference>
<dbReference type="GO" id="GO:0005886">
    <property type="term" value="C:plasma membrane"/>
    <property type="evidence" value="ECO:0000250"/>
    <property type="project" value="UniProtKB"/>
</dbReference>
<dbReference type="GO" id="GO:0140135">
    <property type="term" value="F:mechanosensitive monoatomic cation channel activity"/>
    <property type="evidence" value="ECO:0000250"/>
    <property type="project" value="UniProtKB"/>
</dbReference>
<dbReference type="GO" id="GO:0071260">
    <property type="term" value="P:cellular response to mechanical stimulus"/>
    <property type="evidence" value="ECO:0000250"/>
    <property type="project" value="UniProtKB"/>
</dbReference>
<dbReference type="GO" id="GO:0019230">
    <property type="term" value="P:proprioception"/>
    <property type="evidence" value="ECO:0000250"/>
    <property type="project" value="UniProtKB"/>
</dbReference>
<dbReference type="InterPro" id="IPR050911">
    <property type="entry name" value="DRAM/TMEM150_Autophagy_Mod"/>
</dbReference>
<dbReference type="InterPro" id="IPR019402">
    <property type="entry name" value="Frag1/DRAM/Sfk1"/>
</dbReference>
<dbReference type="PANTHER" id="PTHR21324">
    <property type="entry name" value="FASTING-INDUCIBLE INTEGRAL MEMBRANE PROTEIN TM6P1-RELATED"/>
    <property type="match status" value="1"/>
</dbReference>
<dbReference type="PANTHER" id="PTHR21324:SF7">
    <property type="entry name" value="TRANSMEMBRANE PROTEIN 150C"/>
    <property type="match status" value="1"/>
</dbReference>
<dbReference type="Pfam" id="PF10277">
    <property type="entry name" value="Frag1"/>
    <property type="match status" value="1"/>
</dbReference>
<comment type="function">
    <text evidence="3">Nonselective cationic channel with high permeability to Ca(2+). Component of a mechanosensitive cation channel. Confers mechanically activated (MA) currents with slow inactivation kinetics. May contribute to proprioception.</text>
</comment>
<comment type="catalytic activity">
    <reaction evidence="3">
        <text>Ca(2+)(in) = Ca(2+)(out)</text>
        <dbReference type="Rhea" id="RHEA:29671"/>
        <dbReference type="ChEBI" id="CHEBI:29108"/>
    </reaction>
</comment>
<comment type="catalytic activity">
    <reaction evidence="3">
        <text>Na(+)(in) = Na(+)(out)</text>
        <dbReference type="Rhea" id="RHEA:34963"/>
        <dbReference type="ChEBI" id="CHEBI:29101"/>
    </reaction>
</comment>
<comment type="catalytic activity">
    <reaction evidence="3">
        <text>K(+)(in) = K(+)(out)</text>
        <dbReference type="Rhea" id="RHEA:29463"/>
        <dbReference type="ChEBI" id="CHEBI:29103"/>
    </reaction>
</comment>
<comment type="catalytic activity">
    <reaction evidence="3">
        <text>Mg(2+)(in) = Mg(2+)(out)</text>
        <dbReference type="Rhea" id="RHEA:29827"/>
        <dbReference type="ChEBI" id="CHEBI:18420"/>
    </reaction>
</comment>
<comment type="subcellular location">
    <subcellularLocation>
        <location evidence="1">Cell membrane</location>
        <topology evidence="1">Multi-pass membrane protein</topology>
    </subcellularLocation>
    <subcellularLocation>
        <location evidence="1">Lysosome membrane</location>
        <topology evidence="1">Multi-pass membrane protein</topology>
    </subcellularLocation>
    <text evidence="1">Localizes at the plasma membrane. A portion co-localizes with LAMP1 lysosomal marker.</text>
</comment>
<comment type="miscellaneous">
    <text>Tentonin comes from the Greek 'tentono' meaning to stretch.</text>
</comment>
<comment type="similarity">
    <text evidence="5">Belongs to the DRAM/TMEM150 family.</text>
</comment>
<keyword id="KW-1003">Cell membrane</keyword>
<keyword id="KW-0458">Lysosome</keyword>
<keyword id="KW-0472">Membrane</keyword>
<keyword id="KW-1185">Reference proteome</keyword>
<keyword id="KW-0812">Transmembrane</keyword>
<keyword id="KW-1133">Transmembrane helix</keyword>
<reference key="1">
    <citation type="submission" date="2005-07" db="EMBL/GenBank/DDBJ databases">
        <authorList>
            <person name="Mural R.J."/>
            <person name="Adams M.D."/>
            <person name="Myers E.W."/>
            <person name="Smith H.O."/>
            <person name="Venter J.C."/>
        </authorList>
    </citation>
    <scope>NUCLEOTIDE SEQUENCE [LARGE SCALE GENOMIC DNA]</scope>
</reference>
<reference key="2">
    <citation type="journal article" date="2004" name="Genome Res.">
        <title>The status, quality, and expansion of the NIH full-length cDNA project: the Mammalian Gene Collection (MGC).</title>
        <authorList>
            <consortium name="The MGC Project Team"/>
        </authorList>
    </citation>
    <scope>NUCLEOTIDE SEQUENCE [LARGE SCALE MRNA]</scope>
    <source>
        <tissue>Prostate</tissue>
    </source>
</reference>
<accession>B5DFH9</accession>
<proteinExistence type="evidence at transcript level"/>
<protein>
    <recommendedName>
        <fullName>Transmembrane protein 150C</fullName>
    </recommendedName>
</protein>
<evidence type="ECO:0000250" key="1">
    <source>
        <dbReference type="UniProtKB" id="B9EJG8"/>
    </source>
</evidence>
<evidence type="ECO:0000250" key="2">
    <source>
        <dbReference type="UniProtKB" id="Q86TG1"/>
    </source>
</evidence>
<evidence type="ECO:0000250" key="3">
    <source>
        <dbReference type="UniProtKB" id="Q8C8S3"/>
    </source>
</evidence>
<evidence type="ECO:0000255" key="4"/>
<evidence type="ECO:0000305" key="5"/>
<sequence>MDGKKCSVWMFLPLVFTLFTSAGLWIVYFIAVEDDKILPLNSAARKSGVKHAPYISFAGDDPPASCVFSQVMNMAAFLALVVAVLRFIQLKPKVLNPWLNISGLVALCLASFGMTLLGNFQLTNDEEIHNVGTSLTFGFGTLTCWIQAALTLKVNIKNEGRRAGIPRVILSAVITLCVVLYFILMAQDIHMYAARVQWGLVMCFLAYFGTLAVEFRHYRYEIVCSEYQENFLSFSESLSEASEYQTDQV</sequence>